<proteinExistence type="evidence at protein level"/>
<sequence length="615" mass="67242">MERGERVSVPVSGYSRGEGVTVANELKKVDAVVVGFGWAGAIMAKELTEAGLNVVALERGPHRDTYPDGAYPQSIDELTYNIRKKLFQDLSKSTVTIRHDASQTAVPYRQLAAFLPGTGTGGAGLHWSGVHFRVDPVELNLRSHYEARYGKNFIPEGMTIQDFGVSYNELEPFFDQAEKVFGTSGSAWTIKGKMIGKEKGGNFYAPDRSSDFPLPAQKRTYSAQLFAQAAESVGYHPYDMPSANTSGPYTNTYGAQMGPCNFCGYCSGYACYMYSKASPNVNILPALRQEPKFELRNNAYVLRVNLTGDKKRATGVTYLDGQGREVVQPADLVILSAFQFHNVHLMLLSGIGQPYNPITNEGVVGRNFAYQNISTLKALFDKNTTTNPFIGAGGAGVAVDDFNADNFDHGPYGFVGGSPFWVNQAGTKPVSGLPTPKGTPNWGSQWKAAVADTYNHHISMDAHGAHQSYRANYLDLDPNYKNVYGQPLLRMTFDWQDNDIRMAQFMVGKMRKITEAMNPKMIIGGAKGPGTHFDTTVYQTTHMSGGAIMGEDPKTSAVNRYLQSWDVPNVFVPGASAFPQGLGYNPTGMVAALTYWSAKAIREQYLKNPGPLVQA</sequence>
<feature type="signal peptide" evidence="2">
    <location>
        <begin position="1"/>
        <end position="22"/>
    </location>
</feature>
<feature type="chain" id="PRO_0000045854" description="Gluconate 2-dehydrogenase flavoprotein">
    <location>
        <begin position="23"/>
        <end position="615"/>
    </location>
</feature>
<feature type="active site" description="Proton acceptor" evidence="1">
    <location>
        <position position="542"/>
    </location>
</feature>
<comment type="function">
    <text>Part of the heterotrimer that catalyzes the conversion of D-gluconate to 2-dehydro-D-gluconate. This subunit functions as the dehydrogenase.</text>
</comment>
<comment type="catalytic activity">
    <reaction>
        <text>D-gluconate + A = 2-dehydro-D-gluconate + AH2</text>
        <dbReference type="Rhea" id="RHEA:12769"/>
        <dbReference type="ChEBI" id="CHEBI:13193"/>
        <dbReference type="ChEBI" id="CHEBI:16808"/>
        <dbReference type="ChEBI" id="CHEBI:17499"/>
        <dbReference type="ChEBI" id="CHEBI:18391"/>
        <dbReference type="EC" id="1.1.99.3"/>
    </reaction>
</comment>
<comment type="cofactor">
    <cofactor>
        <name>FAD</name>
        <dbReference type="ChEBI" id="CHEBI:57692"/>
    </cofactor>
</comment>
<comment type="biophysicochemical properties">
    <phDependence>
        <text evidence="2">Optimum pH is 5.0.</text>
    </phDependence>
    <temperatureDependence>
        <text evidence="2">Optimum temperature is 30 degrees Celsius.</text>
    </temperatureDependence>
</comment>
<comment type="subunit">
    <text>Heterotrimer.</text>
</comment>
<comment type="subcellular location">
    <subcellularLocation>
        <location evidence="3">Cell membrane</location>
        <topology evidence="3">Peripheral membrane protein</topology>
        <orientation evidence="3">Periplasmic side</orientation>
    </subcellularLocation>
</comment>
<comment type="similarity">
    <text evidence="3">Belongs to the GMC oxidoreductase family.</text>
</comment>
<organism>
    <name type="scientific">Pantoea cypripedii</name>
    <name type="common">Pectobacterium cypripedii</name>
    <name type="synonym">Erwinia cypripedii</name>
    <dbReference type="NCBI Taxonomy" id="55209"/>
    <lineage>
        <taxon>Bacteria</taxon>
        <taxon>Pseudomonadati</taxon>
        <taxon>Pseudomonadota</taxon>
        <taxon>Gammaproteobacteria</taxon>
        <taxon>Enterobacterales</taxon>
        <taxon>Erwiniaceae</taxon>
        <taxon>Pantoea</taxon>
    </lineage>
</organism>
<protein>
    <recommendedName>
        <fullName>Gluconate 2-dehydrogenase flavoprotein</fullName>
        <ecNumber>1.1.99.3</ecNumber>
    </recommendedName>
    <alternativeName>
        <fullName>GA 2-DH dehydrogenase subunit</fullName>
        <shortName>GADH dehydrogenase subunit</shortName>
    </alternativeName>
</protein>
<name>GADH1_PANCY</name>
<evidence type="ECO:0000250" key="1">
    <source>
        <dbReference type="UniProtKB" id="E4QP00"/>
    </source>
</evidence>
<evidence type="ECO:0000269" key="2">
    <source>
    </source>
</evidence>
<evidence type="ECO:0000305" key="3"/>
<keyword id="KW-1003">Cell membrane</keyword>
<keyword id="KW-0903">Direct protein sequencing</keyword>
<keyword id="KW-0274">FAD</keyword>
<keyword id="KW-0285">Flavoprotein</keyword>
<keyword id="KW-0472">Membrane</keyword>
<keyword id="KW-0560">Oxidoreductase</keyword>
<keyword id="KW-0732">Signal</keyword>
<dbReference type="EC" id="1.1.99.3"/>
<dbReference type="EMBL" id="U97665">
    <property type="protein sequence ID" value="AAC45885.1"/>
    <property type="molecule type" value="Genomic_DNA"/>
</dbReference>
<dbReference type="PIR" id="B38575">
    <property type="entry name" value="B38575"/>
</dbReference>
<dbReference type="SMR" id="O34214"/>
<dbReference type="STRING" id="55209.HA50_01500"/>
<dbReference type="BioCyc" id="MetaCyc:MONOMER-18005"/>
<dbReference type="GO" id="GO:0005886">
    <property type="term" value="C:plasma membrane"/>
    <property type="evidence" value="ECO:0007669"/>
    <property type="project" value="UniProtKB-SubCell"/>
</dbReference>
<dbReference type="GO" id="GO:0050660">
    <property type="term" value="F:flavin adenine dinucleotide binding"/>
    <property type="evidence" value="ECO:0007669"/>
    <property type="project" value="InterPro"/>
</dbReference>
<dbReference type="GO" id="GO:0033717">
    <property type="term" value="F:gluconate 2-dehydrogenase (acceptor) activity"/>
    <property type="evidence" value="ECO:0007669"/>
    <property type="project" value="UniProtKB-EC"/>
</dbReference>
<dbReference type="Gene3D" id="3.50.50.60">
    <property type="entry name" value="FAD/NAD(P)-binding domain"/>
    <property type="match status" value="2"/>
</dbReference>
<dbReference type="InterPro" id="IPR036188">
    <property type="entry name" value="FAD/NAD-bd_sf"/>
</dbReference>
<dbReference type="InterPro" id="IPR000172">
    <property type="entry name" value="GMC_OxRdtase_N"/>
</dbReference>
<dbReference type="InterPro" id="IPR007867">
    <property type="entry name" value="GMC_OxRtase_C"/>
</dbReference>
<dbReference type="PANTHER" id="PTHR46056">
    <property type="entry name" value="LONG-CHAIN-ALCOHOL OXIDASE"/>
    <property type="match status" value="1"/>
</dbReference>
<dbReference type="PANTHER" id="PTHR46056:SF12">
    <property type="entry name" value="LONG-CHAIN-ALCOHOL OXIDASE"/>
    <property type="match status" value="1"/>
</dbReference>
<dbReference type="Pfam" id="PF05199">
    <property type="entry name" value="GMC_oxred_C"/>
    <property type="match status" value="1"/>
</dbReference>
<dbReference type="Pfam" id="PF00732">
    <property type="entry name" value="GMC_oxred_N"/>
    <property type="match status" value="1"/>
</dbReference>
<dbReference type="SUPFAM" id="SSF54373">
    <property type="entry name" value="FAD-linked reductases, C-terminal domain"/>
    <property type="match status" value="1"/>
</dbReference>
<dbReference type="SUPFAM" id="SSF51905">
    <property type="entry name" value="FAD/NAD(P)-binding domain"/>
    <property type="match status" value="1"/>
</dbReference>
<accession>O34214</accession>
<reference key="1">
    <citation type="journal article" date="1997" name="J. Bacteriol.">
        <title>Cloning and expression of a gene cluster encoding three subunits of membrane-bound gluconate dehydrogenase from Erwinia cypripedii ATCC 29267 in Escherichia coli.</title>
        <authorList>
            <person name="Yum D.-Y."/>
            <person name="Lee Y.-P."/>
            <person name="Pan J.-G."/>
        </authorList>
    </citation>
    <scope>NUCLEOTIDE SEQUENCE [GENOMIC DNA]</scope>
    <scope>PROTEIN SEQUENCE OF 23-37</scope>
    <scope>BIOPHYSICOCHEMICAL PROPERTIES</scope>
    <source>
        <strain>ATCC 29267 / DSM 3873 / CIP 105195 / LMG 2657 / NCPPB 3004</strain>
    </source>
</reference>